<comment type="subcellular location">
    <subcellularLocation>
        <location evidence="3">Cytoplasm</location>
    </subcellularLocation>
    <subcellularLocation>
        <location evidence="1">Golgi apparatus</location>
    </subcellularLocation>
</comment>
<comment type="similarity">
    <text evidence="4">Belongs to the SGM1 family.</text>
</comment>
<organism>
    <name type="scientific">Schizosaccharomyces pombe (strain 972 / ATCC 24843)</name>
    <name type="common">Fission yeast</name>
    <dbReference type="NCBI Taxonomy" id="284812"/>
    <lineage>
        <taxon>Eukaryota</taxon>
        <taxon>Fungi</taxon>
        <taxon>Dikarya</taxon>
        <taxon>Ascomycota</taxon>
        <taxon>Taphrinomycotina</taxon>
        <taxon>Schizosaccharomycetes</taxon>
        <taxon>Schizosaccharomycetales</taxon>
        <taxon>Schizosaccharomycetaceae</taxon>
        <taxon>Schizosaccharomyces</taxon>
    </lineage>
</organism>
<protein>
    <recommendedName>
        <fullName>Protein sgm1</fullName>
    </recommendedName>
</protein>
<keyword id="KW-0175">Coiled coil</keyword>
<keyword id="KW-0963">Cytoplasm</keyword>
<keyword id="KW-0333">Golgi apparatus</keyword>
<keyword id="KW-1185">Reference proteome</keyword>
<gene>
    <name type="primary">sgm1</name>
    <name type="ORF">SPBC365.07c</name>
</gene>
<dbReference type="EMBL" id="CU329671">
    <property type="protein sequence ID" value="CAB44759.1"/>
    <property type="molecule type" value="Genomic_DNA"/>
</dbReference>
<dbReference type="PIR" id="T40314">
    <property type="entry name" value="T40314"/>
</dbReference>
<dbReference type="SMR" id="Q9Y7Y1"/>
<dbReference type="BioGRID" id="277447">
    <property type="interactions" value="12"/>
</dbReference>
<dbReference type="FunCoup" id="Q9Y7Y1">
    <property type="interactions" value="168"/>
</dbReference>
<dbReference type="iPTMnet" id="Q9Y7Y1"/>
<dbReference type="PaxDb" id="4896-SPBC365.07c.1"/>
<dbReference type="EnsemblFungi" id="SPBC365.07c.1">
    <property type="protein sequence ID" value="SPBC365.07c.1:pep"/>
    <property type="gene ID" value="SPBC365.07c"/>
</dbReference>
<dbReference type="KEGG" id="spo:2540931"/>
<dbReference type="PomBase" id="SPBC365.07c"/>
<dbReference type="VEuPathDB" id="FungiDB:SPBC365.07c"/>
<dbReference type="eggNOG" id="KOG4673">
    <property type="taxonomic scope" value="Eukaryota"/>
</dbReference>
<dbReference type="HOGENOM" id="CLU_497969_0_0_1"/>
<dbReference type="InParanoid" id="Q9Y7Y1"/>
<dbReference type="OMA" id="NWESIEF"/>
<dbReference type="PhylomeDB" id="Q9Y7Y1"/>
<dbReference type="PRO" id="PR:Q9Y7Y1"/>
<dbReference type="Proteomes" id="UP000002485">
    <property type="component" value="Chromosome II"/>
</dbReference>
<dbReference type="GO" id="GO:0005737">
    <property type="term" value="C:cytoplasm"/>
    <property type="evidence" value="ECO:0007005"/>
    <property type="project" value="PomBase"/>
</dbReference>
<dbReference type="GO" id="GO:0005829">
    <property type="term" value="C:cytosol"/>
    <property type="evidence" value="ECO:0007005"/>
    <property type="project" value="PomBase"/>
</dbReference>
<dbReference type="GO" id="GO:0005794">
    <property type="term" value="C:Golgi apparatus"/>
    <property type="evidence" value="ECO:0007669"/>
    <property type="project" value="UniProtKB-SubCell"/>
</dbReference>
<dbReference type="GO" id="GO:0006891">
    <property type="term" value="P:intra-Golgi vesicle-mediated transport"/>
    <property type="evidence" value="ECO:0000266"/>
    <property type="project" value="PomBase"/>
</dbReference>
<dbReference type="InterPro" id="IPR052602">
    <property type="entry name" value="Growth_transcription_reg"/>
</dbReference>
<dbReference type="InterPro" id="IPR022092">
    <property type="entry name" value="TMF_DNA-bd"/>
</dbReference>
<dbReference type="InterPro" id="IPR022091">
    <property type="entry name" value="TMF_TATA-bd"/>
</dbReference>
<dbReference type="PANTHER" id="PTHR46515:SF1">
    <property type="entry name" value="TATA ELEMENT MODULATORY FACTOR"/>
    <property type="match status" value="1"/>
</dbReference>
<dbReference type="PANTHER" id="PTHR46515">
    <property type="entry name" value="TATA ELEMENT MODULATORY FACTOR TMF1"/>
    <property type="match status" value="1"/>
</dbReference>
<dbReference type="Pfam" id="PF12329">
    <property type="entry name" value="TMF_DNA_bd"/>
    <property type="match status" value="1"/>
</dbReference>
<dbReference type="Pfam" id="PF12325">
    <property type="entry name" value="TMF_TATA_bd"/>
    <property type="match status" value="1"/>
</dbReference>
<accession>Q9Y7Y1</accession>
<reference key="1">
    <citation type="journal article" date="2002" name="Nature">
        <title>The genome sequence of Schizosaccharomyces pombe.</title>
        <authorList>
            <person name="Wood V."/>
            <person name="Gwilliam R."/>
            <person name="Rajandream M.A."/>
            <person name="Lyne M.H."/>
            <person name="Lyne R."/>
            <person name="Stewart A."/>
            <person name="Sgouros J.G."/>
            <person name="Peat N."/>
            <person name="Hayles J."/>
            <person name="Baker S.G."/>
            <person name="Basham D."/>
            <person name="Bowman S."/>
            <person name="Brooks K."/>
            <person name="Brown D."/>
            <person name="Brown S."/>
            <person name="Chillingworth T."/>
            <person name="Churcher C.M."/>
            <person name="Collins M."/>
            <person name="Connor R."/>
            <person name="Cronin A."/>
            <person name="Davis P."/>
            <person name="Feltwell T."/>
            <person name="Fraser A."/>
            <person name="Gentles S."/>
            <person name="Goble A."/>
            <person name="Hamlin N."/>
            <person name="Harris D.E."/>
            <person name="Hidalgo J."/>
            <person name="Hodgson G."/>
            <person name="Holroyd S."/>
            <person name="Hornsby T."/>
            <person name="Howarth S."/>
            <person name="Huckle E.J."/>
            <person name="Hunt S."/>
            <person name="Jagels K."/>
            <person name="James K.D."/>
            <person name="Jones L."/>
            <person name="Jones M."/>
            <person name="Leather S."/>
            <person name="McDonald S."/>
            <person name="McLean J."/>
            <person name="Mooney P."/>
            <person name="Moule S."/>
            <person name="Mungall K.L."/>
            <person name="Murphy L.D."/>
            <person name="Niblett D."/>
            <person name="Odell C."/>
            <person name="Oliver K."/>
            <person name="O'Neil S."/>
            <person name="Pearson D."/>
            <person name="Quail M.A."/>
            <person name="Rabbinowitsch E."/>
            <person name="Rutherford K.M."/>
            <person name="Rutter S."/>
            <person name="Saunders D."/>
            <person name="Seeger K."/>
            <person name="Sharp S."/>
            <person name="Skelton J."/>
            <person name="Simmonds M.N."/>
            <person name="Squares R."/>
            <person name="Squares S."/>
            <person name="Stevens K."/>
            <person name="Taylor K."/>
            <person name="Taylor R.G."/>
            <person name="Tivey A."/>
            <person name="Walsh S.V."/>
            <person name="Warren T."/>
            <person name="Whitehead S."/>
            <person name="Woodward J.R."/>
            <person name="Volckaert G."/>
            <person name="Aert R."/>
            <person name="Robben J."/>
            <person name="Grymonprez B."/>
            <person name="Weltjens I."/>
            <person name="Vanstreels E."/>
            <person name="Rieger M."/>
            <person name="Schaefer M."/>
            <person name="Mueller-Auer S."/>
            <person name="Gabel C."/>
            <person name="Fuchs M."/>
            <person name="Duesterhoeft A."/>
            <person name="Fritzc C."/>
            <person name="Holzer E."/>
            <person name="Moestl D."/>
            <person name="Hilbert H."/>
            <person name="Borzym K."/>
            <person name="Langer I."/>
            <person name="Beck A."/>
            <person name="Lehrach H."/>
            <person name="Reinhardt R."/>
            <person name="Pohl T.M."/>
            <person name="Eger P."/>
            <person name="Zimmermann W."/>
            <person name="Wedler H."/>
            <person name="Wambutt R."/>
            <person name="Purnelle B."/>
            <person name="Goffeau A."/>
            <person name="Cadieu E."/>
            <person name="Dreano S."/>
            <person name="Gloux S."/>
            <person name="Lelaure V."/>
            <person name="Mottier S."/>
            <person name="Galibert F."/>
            <person name="Aves S.J."/>
            <person name="Xiang Z."/>
            <person name="Hunt C."/>
            <person name="Moore K."/>
            <person name="Hurst S.M."/>
            <person name="Lucas M."/>
            <person name="Rochet M."/>
            <person name="Gaillardin C."/>
            <person name="Tallada V.A."/>
            <person name="Garzon A."/>
            <person name="Thode G."/>
            <person name="Daga R.R."/>
            <person name="Cruzado L."/>
            <person name="Jimenez J."/>
            <person name="Sanchez M."/>
            <person name="del Rey F."/>
            <person name="Benito J."/>
            <person name="Dominguez A."/>
            <person name="Revuelta J.L."/>
            <person name="Moreno S."/>
            <person name="Armstrong J."/>
            <person name="Forsburg S.L."/>
            <person name="Cerutti L."/>
            <person name="Lowe T."/>
            <person name="McCombie W.R."/>
            <person name="Paulsen I."/>
            <person name="Potashkin J."/>
            <person name="Shpakovski G.V."/>
            <person name="Ussery D."/>
            <person name="Barrell B.G."/>
            <person name="Nurse P."/>
        </authorList>
    </citation>
    <scope>NUCLEOTIDE SEQUENCE [LARGE SCALE GENOMIC DNA]</scope>
    <source>
        <strain>972 / ATCC 24843</strain>
    </source>
</reference>
<reference key="2">
    <citation type="journal article" date="2006" name="Nat. Biotechnol.">
        <title>ORFeome cloning and global analysis of protein localization in the fission yeast Schizosaccharomyces pombe.</title>
        <authorList>
            <person name="Matsuyama A."/>
            <person name="Arai R."/>
            <person name="Yashiroda Y."/>
            <person name="Shirai A."/>
            <person name="Kamata A."/>
            <person name="Sekido S."/>
            <person name="Kobayashi Y."/>
            <person name="Hashimoto A."/>
            <person name="Hamamoto M."/>
            <person name="Hiraoka Y."/>
            <person name="Horinouchi S."/>
            <person name="Yoshida M."/>
        </authorList>
    </citation>
    <scope>SUBCELLULAR LOCATION [LARGE SCALE ANALYSIS]</scope>
</reference>
<sequence length="547" mass="62436">MENSKWGGFLKKAMSNVETSIDKVLDGNQIEEMSRGNAKSKDEIIAKLLTEGQALSKNELKLNNTIKQLKKSLSEAETKLKRLDEKQATPELQVSDSKEMEEQLELQKSQFEKRISILEKEKEDLQRKMEELTVESMEVVRLTRQVETLSTQYSIQRSQWVREDEKKKKEIQDLKELYEKSEHGAKNWERERETFQNQVSQMSKQLDSLEKLCERKDEEIRSSQAFNMTLREENDTLAAQNLDLQTQLDRLQRELDTNIRSNVKSKPKKIVTTGGIPENNDYTVGKVDTLKVTKEDEDPTTPTNAIPIPSSMSKRDEALENDKDNYFDDLHPLNISTSPQPSPLSFSEIPQSDTRNALENFLDNLPSPSEERSRISRSASEARKLGINAQSRYASISSAVLSPPSEASRKFSLYESEAISPTSGTPSNLEKGAGNVPDVSLLEQLATTIRRLEAELQTTKQQVAQLIIQRDQARQEIVDAYVNNDANEDSKKQVEELRLQLQNLEKEHASTLVTLKQKSDKVFELELDIKDMRELYVSQIDILAGRQ</sequence>
<evidence type="ECO:0000250" key="1"/>
<evidence type="ECO:0000255" key="2"/>
<evidence type="ECO:0000269" key="3">
    <source>
    </source>
</evidence>
<evidence type="ECO:0000305" key="4"/>
<feature type="chain" id="PRO_0000351447" description="Protein sgm1">
    <location>
        <begin position="1"/>
        <end position="547"/>
    </location>
</feature>
<feature type="coiled-coil region" evidence="2">
    <location>
        <begin position="53"/>
        <end position="264"/>
    </location>
</feature>
<feature type="coiled-coil region" evidence="2">
    <location>
        <begin position="439"/>
        <end position="535"/>
    </location>
</feature>
<proteinExistence type="inferred from homology"/>
<name>SGM1_SCHPO</name>